<gene>
    <name type="primary">PXR1</name>
    <name type="ORF">Kpol_1028p62</name>
</gene>
<organism>
    <name type="scientific">Vanderwaltozyma polyspora (strain ATCC 22028 / DSM 70294 / BCRC 21397 / CBS 2163 / NBRC 10782 / NRRL Y-8283 / UCD 57-17)</name>
    <name type="common">Kluyveromyces polysporus</name>
    <dbReference type="NCBI Taxonomy" id="436907"/>
    <lineage>
        <taxon>Eukaryota</taxon>
        <taxon>Fungi</taxon>
        <taxon>Dikarya</taxon>
        <taxon>Ascomycota</taxon>
        <taxon>Saccharomycotina</taxon>
        <taxon>Saccharomycetes</taxon>
        <taxon>Saccharomycetales</taxon>
        <taxon>Saccharomycetaceae</taxon>
        <taxon>Vanderwaltozyma</taxon>
    </lineage>
</organism>
<feature type="initiator methionine" description="Removed" evidence="4">
    <location>
        <position position="1"/>
    </location>
</feature>
<feature type="chain" id="PRO_0000324897" description="Protein PXR1">
    <location>
        <begin position="2"/>
        <end position="287"/>
    </location>
</feature>
<feature type="domain" description="G-patch" evidence="2">
    <location>
        <begin position="25"/>
        <end position="72"/>
    </location>
</feature>
<feature type="region of interest" description="Disordered" evidence="3">
    <location>
        <begin position="143"/>
        <end position="254"/>
    </location>
</feature>
<feature type="compositionally biased region" description="Basic and acidic residues" evidence="3">
    <location>
        <begin position="143"/>
        <end position="155"/>
    </location>
</feature>
<feature type="compositionally biased region" description="Basic residues" evidence="3">
    <location>
        <begin position="163"/>
        <end position="190"/>
    </location>
</feature>
<feature type="compositionally biased region" description="Basic and acidic residues" evidence="3">
    <location>
        <begin position="191"/>
        <end position="200"/>
    </location>
</feature>
<feature type="compositionally biased region" description="Basic residues" evidence="3">
    <location>
        <begin position="201"/>
        <end position="220"/>
    </location>
</feature>
<feature type="compositionally biased region" description="Basic and acidic residues" evidence="3">
    <location>
        <begin position="221"/>
        <end position="230"/>
    </location>
</feature>
<feature type="compositionally biased region" description="Polar residues" evidence="3">
    <location>
        <begin position="239"/>
        <end position="251"/>
    </location>
</feature>
<protein>
    <recommendedName>
        <fullName>Protein PXR1</fullName>
    </recommendedName>
    <alternativeName>
        <fullName>PinX1-related protein 1</fullName>
    </alternativeName>
</protein>
<reference key="1">
    <citation type="journal article" date="2007" name="Proc. Natl. Acad. Sci. U.S.A.">
        <title>Independent sorting-out of thousands of duplicated gene pairs in two yeast species descended from a whole-genome duplication.</title>
        <authorList>
            <person name="Scannell D.R."/>
            <person name="Frank A.C."/>
            <person name="Conant G.C."/>
            <person name="Byrne K.P."/>
            <person name="Woolfit M."/>
            <person name="Wolfe K.H."/>
        </authorList>
    </citation>
    <scope>NUCLEOTIDE SEQUENCE [LARGE SCALE GENOMIC DNA]</scope>
    <source>
        <strain>ATCC 22028 / DSM 70294 / BCRC 21397 / CBS 2163 / NBRC 10782 / NRRL Y-8283 / UCD 57-17</strain>
    </source>
</reference>
<comment type="function">
    <text evidence="1">Involved in rRNA-processing at A0, A1 and A2 sites and negatively regulates telomerase.</text>
</comment>
<comment type="subcellular location">
    <subcellularLocation>
        <location evidence="1">Nucleus</location>
        <location evidence="1">Nucleolus</location>
    </subcellularLocation>
</comment>
<comment type="similarity">
    <text evidence="4">Belongs to the PINX1 family.</text>
</comment>
<evidence type="ECO:0000250" key="1"/>
<evidence type="ECO:0000255" key="2">
    <source>
        <dbReference type="PROSITE-ProRule" id="PRU00092"/>
    </source>
</evidence>
<evidence type="ECO:0000256" key="3">
    <source>
        <dbReference type="SAM" id="MobiDB-lite"/>
    </source>
</evidence>
<evidence type="ECO:0000305" key="4"/>
<sequence length="287" mass="33196">MGLAGTKTKQRFGLDPRNTAWSNDTSRFGHLQLEKFGWKPGMGLGMSPTSSHKTHIKVSIKDDNLGLGAKIKRTERKDEFDNGECAGLDVFQRILGRLNGKQEEISKELDIQRKQKIIDGKWGIHFVRGDVLASTWDPETKKLKSYSNDKKRSRDDDDEKLSSKNKSKKQKKDKKDKKDKKDKKDKKDKKDKKDKTEKKEKKEKKEKKEKKEKKDKKDKKDKKDKIDKKDKKDKKSLKNNIEVSTTASNIPSTVSTRLSVRSRWIKQKRAATMDSKALNEIFMVTNT</sequence>
<name>PXR1_VANPO</name>
<accession>A7TG30</accession>
<keyword id="KW-0539">Nucleus</keyword>
<keyword id="KW-1185">Reference proteome</keyword>
<keyword id="KW-0690">Ribosome biogenesis</keyword>
<keyword id="KW-0698">rRNA processing</keyword>
<dbReference type="EMBL" id="DS480385">
    <property type="protein sequence ID" value="EDO18787.1"/>
    <property type="molecule type" value="Genomic_DNA"/>
</dbReference>
<dbReference type="RefSeq" id="XP_001646645.1">
    <property type="nucleotide sequence ID" value="XM_001646595.1"/>
</dbReference>
<dbReference type="FunCoup" id="A7TG30">
    <property type="interactions" value="264"/>
</dbReference>
<dbReference type="STRING" id="436907.A7TG30"/>
<dbReference type="GeneID" id="5547102"/>
<dbReference type="KEGG" id="vpo:Kpol_1028p62"/>
<dbReference type="eggNOG" id="KOG2809">
    <property type="taxonomic scope" value="Eukaryota"/>
</dbReference>
<dbReference type="HOGENOM" id="CLU_052839_0_0_1"/>
<dbReference type="InParanoid" id="A7TG30"/>
<dbReference type="OMA" id="PCWDQSS"/>
<dbReference type="OrthoDB" id="29523at2759"/>
<dbReference type="PhylomeDB" id="A7TG30"/>
<dbReference type="Proteomes" id="UP000000267">
    <property type="component" value="Unassembled WGS sequence"/>
</dbReference>
<dbReference type="GO" id="GO:0005730">
    <property type="term" value="C:nucleolus"/>
    <property type="evidence" value="ECO:0007669"/>
    <property type="project" value="UniProtKB-SubCell"/>
</dbReference>
<dbReference type="GO" id="GO:0003676">
    <property type="term" value="F:nucleic acid binding"/>
    <property type="evidence" value="ECO:0007669"/>
    <property type="project" value="InterPro"/>
</dbReference>
<dbReference type="GO" id="GO:0006364">
    <property type="term" value="P:rRNA processing"/>
    <property type="evidence" value="ECO:0007669"/>
    <property type="project" value="UniProtKB-KW"/>
</dbReference>
<dbReference type="InterPro" id="IPR000467">
    <property type="entry name" value="G_patch_dom"/>
</dbReference>
<dbReference type="InterPro" id="IPR050656">
    <property type="entry name" value="PINX1"/>
</dbReference>
<dbReference type="PANTHER" id="PTHR23149">
    <property type="entry name" value="G PATCH DOMAIN CONTAINING PROTEIN"/>
    <property type="match status" value="1"/>
</dbReference>
<dbReference type="PANTHER" id="PTHR23149:SF31">
    <property type="entry name" value="PROTEIN PXR1"/>
    <property type="match status" value="1"/>
</dbReference>
<dbReference type="Pfam" id="PF01585">
    <property type="entry name" value="G-patch"/>
    <property type="match status" value="1"/>
</dbReference>
<dbReference type="SMART" id="SM00443">
    <property type="entry name" value="G_patch"/>
    <property type="match status" value="1"/>
</dbReference>
<dbReference type="PROSITE" id="PS50174">
    <property type="entry name" value="G_PATCH"/>
    <property type="match status" value="1"/>
</dbReference>
<proteinExistence type="inferred from homology"/>